<reference key="1">
    <citation type="journal article" date="2005" name="Mol. Phylogenet. Evol.">
        <title>Multigene phylogeny of the Old World mice, Murinae, reveals distinct geographic lineages and the declining utility of mitochondrial genes compared to nuclear genes.</title>
        <authorList>
            <person name="Steppan S.J."/>
            <person name="Adkins R.M."/>
            <person name="Spinks P.Q."/>
            <person name="Hale C."/>
        </authorList>
    </citation>
    <scope>NUCLEOTIDE SEQUENCE [GENOMIC DNA]</scope>
</reference>
<proteinExistence type="inferred from homology"/>
<name>COX2_LEGFO</name>
<geneLocation type="mitochondrion"/>
<keyword id="KW-0186">Copper</keyword>
<keyword id="KW-0249">Electron transport</keyword>
<keyword id="KW-0460">Magnesium</keyword>
<keyword id="KW-0472">Membrane</keyword>
<keyword id="KW-0479">Metal-binding</keyword>
<keyword id="KW-0496">Mitochondrion</keyword>
<keyword id="KW-0999">Mitochondrion inner membrane</keyword>
<keyword id="KW-0597">Phosphoprotein</keyword>
<keyword id="KW-0679">Respiratory chain</keyword>
<keyword id="KW-1278">Translocase</keyword>
<keyword id="KW-0812">Transmembrane</keyword>
<keyword id="KW-1133">Transmembrane helix</keyword>
<keyword id="KW-0813">Transport</keyword>
<organism>
    <name type="scientific">Leggadina forresti</name>
    <name type="common">Forrest's mouse</name>
    <name type="synonym">Pseudomys forresti</name>
    <dbReference type="NCBI Taxonomy" id="81935"/>
    <lineage>
        <taxon>Eukaryota</taxon>
        <taxon>Metazoa</taxon>
        <taxon>Chordata</taxon>
        <taxon>Craniata</taxon>
        <taxon>Vertebrata</taxon>
        <taxon>Euteleostomi</taxon>
        <taxon>Mammalia</taxon>
        <taxon>Eutheria</taxon>
        <taxon>Euarchontoglires</taxon>
        <taxon>Glires</taxon>
        <taxon>Rodentia</taxon>
        <taxon>Myomorpha</taxon>
        <taxon>Muroidea</taxon>
        <taxon>Muridae</taxon>
        <taxon>Murinae</taxon>
        <taxon>Leggadina</taxon>
    </lineage>
</organism>
<comment type="function">
    <text evidence="2">Component of the cytochrome c oxidase, the last enzyme in the mitochondrial electron transport chain which drives oxidative phosphorylation. The respiratory chain contains 3 multisubunit complexes succinate dehydrogenase (complex II, CII), ubiquinol-cytochrome c oxidoreductase (cytochrome b-c1 complex, complex III, CIII) and cytochrome c oxidase (complex IV, CIV), that cooperate to transfer electrons derived from NADH and succinate to molecular oxygen, creating an electrochemical gradient over the inner membrane that drives transmembrane transport and the ATP synthase. Cytochrome c oxidase is the component of the respiratory chain that catalyzes the reduction of oxygen to water. Electrons originating from reduced cytochrome c in the intermembrane space (IMS) are transferred via the dinuclear copper A center (CU(A)) of subunit 2 and heme A of subunit 1 to the active site in subunit 1, a binuclear center (BNC) formed by heme A3 and copper B (CU(B)). The BNC reduces molecular oxygen to 2 water molecules using 4 electrons from cytochrome c in the IMS and 4 protons from the mitochondrial matrix.</text>
</comment>
<comment type="catalytic activity">
    <reaction evidence="2">
        <text>4 Fe(II)-[cytochrome c] + O2 + 8 H(+)(in) = 4 Fe(III)-[cytochrome c] + 2 H2O + 4 H(+)(out)</text>
        <dbReference type="Rhea" id="RHEA:11436"/>
        <dbReference type="Rhea" id="RHEA-COMP:10350"/>
        <dbReference type="Rhea" id="RHEA-COMP:14399"/>
        <dbReference type="ChEBI" id="CHEBI:15377"/>
        <dbReference type="ChEBI" id="CHEBI:15378"/>
        <dbReference type="ChEBI" id="CHEBI:15379"/>
        <dbReference type="ChEBI" id="CHEBI:29033"/>
        <dbReference type="ChEBI" id="CHEBI:29034"/>
        <dbReference type="EC" id="7.1.1.9"/>
    </reaction>
    <physiologicalReaction direction="left-to-right" evidence="2">
        <dbReference type="Rhea" id="RHEA:11437"/>
    </physiologicalReaction>
</comment>
<comment type="cofactor">
    <cofactor evidence="3">
        <name>Cu cation</name>
        <dbReference type="ChEBI" id="CHEBI:23378"/>
    </cofactor>
    <text evidence="3">Binds a dinuclear copper A center per subunit.</text>
</comment>
<comment type="subunit">
    <text evidence="1 3">Component of the cytochrome c oxidase (complex IV, CIV), a multisubunit enzyme composed of 14 subunits. The complex is composed of a catalytic core of 3 subunits MT-CO1, MT-CO2 and MT-CO3, encoded in the mitochondrial DNA, and 11 supernumerary subunits COX4I, COX5A, COX5B, COX6A, COX6B, COX6C, COX7A, COX7B, COX7C, COX8 and NDUFA4, which are encoded in the nuclear genome. The complex exists as a monomer or a dimer and forms supercomplexes (SCs) in the inner mitochondrial membrane with NADH-ubiquinone oxidoreductase (complex I, CI) and ubiquinol-cytochrome c oxidoreductase (cytochrome b-c1 complex, complex III, CIII), resulting in different assemblies (supercomplex SCI(1)III(2)IV(1) and megacomplex MCI(2)III(2)IV(2)) (By similarity). Found in a complex with TMEM177, COA6, COX18, COX20, SCO1 and SCO2. Interacts with TMEM177 in a COX20-dependent manner. Interacts with COX20. Interacts with COX16 (By similarity).</text>
</comment>
<comment type="subcellular location">
    <subcellularLocation>
        <location evidence="3">Mitochondrion inner membrane</location>
        <topology evidence="3">Multi-pass membrane protein</topology>
    </subcellularLocation>
</comment>
<comment type="similarity">
    <text evidence="4">Belongs to the cytochrome c oxidase subunit 2 family.</text>
</comment>
<sequence>MAYPFQLGLQDATSPIMEELMNFHDHTLMIVFLISSLVLYIISLMLTTKLTHTSTMDAQEVETIWTILPAAILILIALPSLRILYMMDEINNPVLTVKTMGHQWYWSYEYTDYEDLCFDSYMIPTNELKPGELRLLEVDNRVVLPMELPIRMLISSEDVLHSWAVPSLGLKTDAIPGRLNQATVTSNRPGLFYGQCSEICGSNHSFMPIVLEMVPLKYFENWSASMI</sequence>
<evidence type="ECO:0000250" key="1">
    <source>
        <dbReference type="UniProtKB" id="P00403"/>
    </source>
</evidence>
<evidence type="ECO:0000250" key="2">
    <source>
        <dbReference type="UniProtKB" id="P00410"/>
    </source>
</evidence>
<evidence type="ECO:0000250" key="3">
    <source>
        <dbReference type="UniProtKB" id="P68530"/>
    </source>
</evidence>
<evidence type="ECO:0000305" key="4"/>
<feature type="chain" id="PRO_0000254925" description="Cytochrome c oxidase subunit 2">
    <location>
        <begin position="1"/>
        <end position="227"/>
    </location>
</feature>
<feature type="topological domain" description="Mitochondrial intermembrane" evidence="3">
    <location>
        <begin position="1"/>
        <end position="14"/>
    </location>
</feature>
<feature type="transmembrane region" description="Helical; Name=I" evidence="3">
    <location>
        <begin position="15"/>
        <end position="45"/>
    </location>
</feature>
<feature type="topological domain" description="Mitochondrial matrix" evidence="3">
    <location>
        <begin position="46"/>
        <end position="59"/>
    </location>
</feature>
<feature type="transmembrane region" description="Helical; Name=II" evidence="3">
    <location>
        <begin position="60"/>
        <end position="87"/>
    </location>
</feature>
<feature type="topological domain" description="Mitochondrial intermembrane" evidence="3">
    <location>
        <begin position="88"/>
        <end position="227"/>
    </location>
</feature>
<feature type="binding site" evidence="3">
    <location>
        <position position="161"/>
    </location>
    <ligand>
        <name>Cu cation</name>
        <dbReference type="ChEBI" id="CHEBI:23378"/>
        <label>A1</label>
    </ligand>
</feature>
<feature type="binding site" evidence="3">
    <location>
        <position position="196"/>
    </location>
    <ligand>
        <name>Cu cation</name>
        <dbReference type="ChEBI" id="CHEBI:23378"/>
        <label>A1</label>
    </ligand>
</feature>
<feature type="binding site" evidence="3">
    <location>
        <position position="196"/>
    </location>
    <ligand>
        <name>Cu cation</name>
        <dbReference type="ChEBI" id="CHEBI:23378"/>
        <label>A2</label>
    </ligand>
</feature>
<feature type="binding site" evidence="3">
    <location>
        <position position="198"/>
    </location>
    <ligand>
        <name>Cu cation</name>
        <dbReference type="ChEBI" id="CHEBI:23378"/>
        <label>A2</label>
    </ligand>
</feature>
<feature type="binding site" evidence="3">
    <location>
        <position position="198"/>
    </location>
    <ligand>
        <name>Mg(2+)</name>
        <dbReference type="ChEBI" id="CHEBI:18420"/>
        <note>ligand shared with MT-CO1</note>
    </ligand>
</feature>
<feature type="binding site" evidence="3">
    <location>
        <position position="200"/>
    </location>
    <ligand>
        <name>Cu cation</name>
        <dbReference type="ChEBI" id="CHEBI:23378"/>
        <label>A1</label>
    </ligand>
</feature>
<feature type="binding site" evidence="3">
    <location>
        <position position="200"/>
    </location>
    <ligand>
        <name>Cu cation</name>
        <dbReference type="ChEBI" id="CHEBI:23378"/>
        <label>A2</label>
    </ligand>
</feature>
<feature type="binding site" evidence="3">
    <location>
        <position position="204"/>
    </location>
    <ligand>
        <name>Cu cation</name>
        <dbReference type="ChEBI" id="CHEBI:23378"/>
        <label>A2</label>
    </ligand>
</feature>
<feature type="binding site" evidence="3">
    <location>
        <position position="207"/>
    </location>
    <ligand>
        <name>Cu cation</name>
        <dbReference type="ChEBI" id="CHEBI:23378"/>
        <label>A1</label>
    </ligand>
</feature>
<gene>
    <name type="primary">MT-CO2</name>
    <name type="synonym">COII</name>
    <name type="synonym">COX2</name>
    <name type="synonym">COXII</name>
    <name type="synonym">MTCO2</name>
</gene>
<accession>Q38S05</accession>
<protein>
    <recommendedName>
        <fullName>Cytochrome c oxidase subunit 2</fullName>
        <ecNumber>7.1.1.9</ecNumber>
    </recommendedName>
    <alternativeName>
        <fullName>Cytochrome c oxidase polypeptide II</fullName>
    </alternativeName>
</protein>
<dbReference type="EC" id="7.1.1.9"/>
<dbReference type="EMBL" id="DQ019101">
    <property type="protein sequence ID" value="ABA28395.1"/>
    <property type="molecule type" value="Genomic_DNA"/>
</dbReference>
<dbReference type="SMR" id="Q38S05"/>
<dbReference type="GO" id="GO:0005743">
    <property type="term" value="C:mitochondrial inner membrane"/>
    <property type="evidence" value="ECO:0007669"/>
    <property type="project" value="UniProtKB-SubCell"/>
</dbReference>
<dbReference type="GO" id="GO:0045277">
    <property type="term" value="C:respiratory chain complex IV"/>
    <property type="evidence" value="ECO:0000250"/>
    <property type="project" value="UniProtKB"/>
</dbReference>
<dbReference type="GO" id="GO:0005507">
    <property type="term" value="F:copper ion binding"/>
    <property type="evidence" value="ECO:0007669"/>
    <property type="project" value="InterPro"/>
</dbReference>
<dbReference type="GO" id="GO:0004129">
    <property type="term" value="F:cytochrome-c oxidase activity"/>
    <property type="evidence" value="ECO:0007669"/>
    <property type="project" value="UniProtKB-EC"/>
</dbReference>
<dbReference type="GO" id="GO:0042773">
    <property type="term" value="P:ATP synthesis coupled electron transport"/>
    <property type="evidence" value="ECO:0007669"/>
    <property type="project" value="TreeGrafter"/>
</dbReference>
<dbReference type="CDD" id="cd13912">
    <property type="entry name" value="CcO_II_C"/>
    <property type="match status" value="1"/>
</dbReference>
<dbReference type="FunFam" id="1.10.287.90:FF:000001">
    <property type="entry name" value="Cytochrome c oxidase subunit 2"/>
    <property type="match status" value="1"/>
</dbReference>
<dbReference type="FunFam" id="2.60.40.420:FF:000001">
    <property type="entry name" value="Cytochrome c oxidase subunit 2"/>
    <property type="match status" value="1"/>
</dbReference>
<dbReference type="Gene3D" id="1.10.287.90">
    <property type="match status" value="1"/>
</dbReference>
<dbReference type="Gene3D" id="2.60.40.420">
    <property type="entry name" value="Cupredoxins - blue copper proteins"/>
    <property type="match status" value="1"/>
</dbReference>
<dbReference type="InterPro" id="IPR045187">
    <property type="entry name" value="CcO_II"/>
</dbReference>
<dbReference type="InterPro" id="IPR002429">
    <property type="entry name" value="CcO_II-like_C"/>
</dbReference>
<dbReference type="InterPro" id="IPR034210">
    <property type="entry name" value="CcO_II_C"/>
</dbReference>
<dbReference type="InterPro" id="IPR001505">
    <property type="entry name" value="Copper_CuA"/>
</dbReference>
<dbReference type="InterPro" id="IPR008972">
    <property type="entry name" value="Cupredoxin"/>
</dbReference>
<dbReference type="InterPro" id="IPR014222">
    <property type="entry name" value="Cyt_c_oxidase_su2"/>
</dbReference>
<dbReference type="InterPro" id="IPR011759">
    <property type="entry name" value="Cyt_c_oxidase_su2_TM_dom"/>
</dbReference>
<dbReference type="InterPro" id="IPR036257">
    <property type="entry name" value="Cyt_c_oxidase_su2_TM_sf"/>
</dbReference>
<dbReference type="NCBIfam" id="TIGR02866">
    <property type="entry name" value="CoxB"/>
    <property type="match status" value="1"/>
</dbReference>
<dbReference type="PANTHER" id="PTHR22888:SF9">
    <property type="entry name" value="CYTOCHROME C OXIDASE SUBUNIT 2"/>
    <property type="match status" value="1"/>
</dbReference>
<dbReference type="PANTHER" id="PTHR22888">
    <property type="entry name" value="CYTOCHROME C OXIDASE, SUBUNIT II"/>
    <property type="match status" value="1"/>
</dbReference>
<dbReference type="Pfam" id="PF00116">
    <property type="entry name" value="COX2"/>
    <property type="match status" value="1"/>
</dbReference>
<dbReference type="Pfam" id="PF02790">
    <property type="entry name" value="COX2_TM"/>
    <property type="match status" value="1"/>
</dbReference>
<dbReference type="PRINTS" id="PR01166">
    <property type="entry name" value="CYCOXIDASEII"/>
</dbReference>
<dbReference type="SUPFAM" id="SSF49503">
    <property type="entry name" value="Cupredoxins"/>
    <property type="match status" value="1"/>
</dbReference>
<dbReference type="SUPFAM" id="SSF81464">
    <property type="entry name" value="Cytochrome c oxidase subunit II-like, transmembrane region"/>
    <property type="match status" value="1"/>
</dbReference>
<dbReference type="PROSITE" id="PS00078">
    <property type="entry name" value="COX2"/>
    <property type="match status" value="1"/>
</dbReference>
<dbReference type="PROSITE" id="PS50857">
    <property type="entry name" value="COX2_CUA"/>
    <property type="match status" value="1"/>
</dbReference>
<dbReference type="PROSITE" id="PS50999">
    <property type="entry name" value="COX2_TM"/>
    <property type="match status" value="1"/>
</dbReference>